<sequence length="216" mass="24798">MGKIGIFGGTFDPPHYGHLIMANEVLDALQLSQIWFLPNRIPPHKQNEQVTRSEDRLRMLELAVAGHPRFHIETIELEREGPSYTYDTIRQLTAMHPDDEFYFIIGADMVEYLPNWHRIDELIELVTFVGVKRPGFSMETPYPVIEVEVPQFAISSSLIRERVQNGQTIRYLVPEGVRLYIEEKGLYGARTSVADCERAADGTSLRAYAWRCRDGC</sequence>
<feature type="chain" id="PRO_0000310117" description="Probable nicotinate-nucleotide adenylyltransferase">
    <location>
        <begin position="1"/>
        <end position="216"/>
    </location>
</feature>
<keyword id="KW-0067">ATP-binding</keyword>
<keyword id="KW-0520">NAD</keyword>
<keyword id="KW-0547">Nucleotide-binding</keyword>
<keyword id="KW-0548">Nucleotidyltransferase</keyword>
<keyword id="KW-0662">Pyridine nucleotide biosynthesis</keyword>
<keyword id="KW-0808">Transferase</keyword>
<comment type="function">
    <text evidence="1">Catalyzes the reversible adenylation of nicotinate mononucleotide (NaMN) to nicotinic acid adenine dinucleotide (NaAD).</text>
</comment>
<comment type="catalytic activity">
    <reaction evidence="1">
        <text>nicotinate beta-D-ribonucleotide + ATP + H(+) = deamido-NAD(+) + diphosphate</text>
        <dbReference type="Rhea" id="RHEA:22860"/>
        <dbReference type="ChEBI" id="CHEBI:15378"/>
        <dbReference type="ChEBI" id="CHEBI:30616"/>
        <dbReference type="ChEBI" id="CHEBI:33019"/>
        <dbReference type="ChEBI" id="CHEBI:57502"/>
        <dbReference type="ChEBI" id="CHEBI:58437"/>
        <dbReference type="EC" id="2.7.7.18"/>
    </reaction>
</comment>
<comment type="pathway">
    <text evidence="1">Cofactor biosynthesis; NAD(+) biosynthesis; deamido-NAD(+) from nicotinate D-ribonucleotide: step 1/1.</text>
</comment>
<comment type="similarity">
    <text evidence="1">Belongs to the NadD family.</text>
</comment>
<organism>
    <name type="scientific">Geobacillus thermodenitrificans (strain NG80-2)</name>
    <dbReference type="NCBI Taxonomy" id="420246"/>
    <lineage>
        <taxon>Bacteria</taxon>
        <taxon>Bacillati</taxon>
        <taxon>Bacillota</taxon>
        <taxon>Bacilli</taxon>
        <taxon>Bacillales</taxon>
        <taxon>Anoxybacillaceae</taxon>
        <taxon>Geobacillus</taxon>
    </lineage>
</organism>
<reference key="1">
    <citation type="journal article" date="2007" name="Proc. Natl. Acad. Sci. U.S.A.">
        <title>Genome and proteome of long-chain alkane degrading Geobacillus thermodenitrificans NG80-2 isolated from a deep-subsurface oil reservoir.</title>
        <authorList>
            <person name="Feng L."/>
            <person name="Wang W."/>
            <person name="Cheng J."/>
            <person name="Ren Y."/>
            <person name="Zhao G."/>
            <person name="Gao C."/>
            <person name="Tang Y."/>
            <person name="Liu X."/>
            <person name="Han W."/>
            <person name="Peng X."/>
            <person name="Liu R."/>
            <person name="Wang L."/>
        </authorList>
    </citation>
    <scope>NUCLEOTIDE SEQUENCE [LARGE SCALE GENOMIC DNA]</scope>
    <source>
        <strain>NG80-2</strain>
    </source>
</reference>
<protein>
    <recommendedName>
        <fullName evidence="1">Probable nicotinate-nucleotide adenylyltransferase</fullName>
        <ecNumber evidence="1">2.7.7.18</ecNumber>
    </recommendedName>
    <alternativeName>
        <fullName evidence="1">Deamido-NAD(+) diphosphorylase</fullName>
    </alternativeName>
    <alternativeName>
        <fullName evidence="1">Deamido-NAD(+) pyrophosphorylase</fullName>
    </alternativeName>
    <alternativeName>
        <fullName evidence="1">Nicotinate mononucleotide adenylyltransferase</fullName>
        <shortName evidence="1">NaMN adenylyltransferase</shortName>
    </alternativeName>
</protein>
<gene>
    <name evidence="1" type="primary">nadD</name>
    <name type="ordered locus">GTNG_2458</name>
</gene>
<evidence type="ECO:0000255" key="1">
    <source>
        <dbReference type="HAMAP-Rule" id="MF_00244"/>
    </source>
</evidence>
<proteinExistence type="inferred from homology"/>
<dbReference type="EC" id="2.7.7.18" evidence="1"/>
<dbReference type="EMBL" id="CP000557">
    <property type="protein sequence ID" value="ABO67803.1"/>
    <property type="molecule type" value="Genomic_DNA"/>
</dbReference>
<dbReference type="RefSeq" id="WP_011887850.1">
    <property type="nucleotide sequence ID" value="NC_009328.1"/>
</dbReference>
<dbReference type="SMR" id="A4IR49"/>
<dbReference type="GeneID" id="87623394"/>
<dbReference type="KEGG" id="gtn:GTNG_2458"/>
<dbReference type="eggNOG" id="COG1057">
    <property type="taxonomic scope" value="Bacteria"/>
</dbReference>
<dbReference type="HOGENOM" id="CLU_069765_3_1_9"/>
<dbReference type="UniPathway" id="UPA00253">
    <property type="reaction ID" value="UER00332"/>
</dbReference>
<dbReference type="Proteomes" id="UP000001578">
    <property type="component" value="Chromosome"/>
</dbReference>
<dbReference type="GO" id="GO:0005524">
    <property type="term" value="F:ATP binding"/>
    <property type="evidence" value="ECO:0007669"/>
    <property type="project" value="UniProtKB-KW"/>
</dbReference>
<dbReference type="GO" id="GO:0004515">
    <property type="term" value="F:nicotinate-nucleotide adenylyltransferase activity"/>
    <property type="evidence" value="ECO:0007669"/>
    <property type="project" value="UniProtKB-UniRule"/>
</dbReference>
<dbReference type="GO" id="GO:0009435">
    <property type="term" value="P:NAD biosynthetic process"/>
    <property type="evidence" value="ECO:0007669"/>
    <property type="project" value="UniProtKB-UniRule"/>
</dbReference>
<dbReference type="CDD" id="cd02165">
    <property type="entry name" value="NMNAT"/>
    <property type="match status" value="1"/>
</dbReference>
<dbReference type="FunFam" id="3.40.50.620:FF:000079">
    <property type="entry name" value="Probable nicotinate-nucleotide adenylyltransferase"/>
    <property type="match status" value="1"/>
</dbReference>
<dbReference type="Gene3D" id="3.40.50.620">
    <property type="entry name" value="HUPs"/>
    <property type="match status" value="1"/>
</dbReference>
<dbReference type="HAMAP" id="MF_00244">
    <property type="entry name" value="NaMN_adenylyltr"/>
    <property type="match status" value="1"/>
</dbReference>
<dbReference type="InterPro" id="IPR004821">
    <property type="entry name" value="Cyt_trans-like"/>
</dbReference>
<dbReference type="InterPro" id="IPR005248">
    <property type="entry name" value="NadD/NMNAT"/>
</dbReference>
<dbReference type="InterPro" id="IPR014729">
    <property type="entry name" value="Rossmann-like_a/b/a_fold"/>
</dbReference>
<dbReference type="NCBIfam" id="TIGR00125">
    <property type="entry name" value="cyt_tran_rel"/>
    <property type="match status" value="1"/>
</dbReference>
<dbReference type="NCBIfam" id="TIGR00482">
    <property type="entry name" value="nicotinate (nicotinamide) nucleotide adenylyltransferase"/>
    <property type="match status" value="1"/>
</dbReference>
<dbReference type="NCBIfam" id="NF000840">
    <property type="entry name" value="PRK00071.1-3"/>
    <property type="match status" value="1"/>
</dbReference>
<dbReference type="NCBIfam" id="NF000841">
    <property type="entry name" value="PRK00071.1-4"/>
    <property type="match status" value="1"/>
</dbReference>
<dbReference type="PANTHER" id="PTHR39321">
    <property type="entry name" value="NICOTINATE-NUCLEOTIDE ADENYLYLTRANSFERASE-RELATED"/>
    <property type="match status" value="1"/>
</dbReference>
<dbReference type="PANTHER" id="PTHR39321:SF3">
    <property type="entry name" value="PHOSPHOPANTETHEINE ADENYLYLTRANSFERASE"/>
    <property type="match status" value="1"/>
</dbReference>
<dbReference type="Pfam" id="PF01467">
    <property type="entry name" value="CTP_transf_like"/>
    <property type="match status" value="1"/>
</dbReference>
<dbReference type="SUPFAM" id="SSF52374">
    <property type="entry name" value="Nucleotidylyl transferase"/>
    <property type="match status" value="1"/>
</dbReference>
<accession>A4IR49</accession>
<name>NADD_GEOTN</name>